<keyword id="KW-0378">Hydrolase</keyword>
<keyword id="KW-0464">Manganese</keyword>
<keyword id="KW-1185">Reference proteome</keyword>
<sequence>MTPSPHDLLHCGMNSQDRDETNGDRQRLVRVALGQEDGDLLVRGAQVVQPVTREVYAADVLVAGGRVAAVGPDLPARARRTVQARGAYLAPGFIDGHIHIESSLLTPASFAAAVLPHGTTAVVAEPHEIVNVLGPAGLNWMLGAGRTSGLRVYASAPSCVPASEFEQGGARVDAAQVAEMLARPGVLGLAEMMNYPGVLGGDAGVWDILNAGRRSGKRLDGHAAGLGGRELLAYAAAGLHSDHEATTPEEARERLRAGLWLMVREGSAARNLAALLPVLRDLPRRALLVSDDVSVDELLELGHLDRLLRTCVAGGLHPADAVALVTSQPAEYWGLHDLGVIAPGYHADFVLLRDLQHFGVLETFVGGEEARPGGETPPLPGGGVDLGPGWDGATFDPPAHWPTLQMFPDQIVTGRAAPGSGDARLVVADRYGRGEWSSCWTLGSGLRGGTLGISILHDAHQVALLGGSDADLRAAGRALERLGGGIVLVVDGEVREQLPLPYAGLMTDHAPAEAAAALGRVTAAARLLGCMPAGRL</sequence>
<accession>Q9RYP0</accession>
<evidence type="ECO:0000255" key="1">
    <source>
        <dbReference type="HAMAP-Rule" id="MF_01518"/>
    </source>
</evidence>
<evidence type="ECO:0000256" key="2">
    <source>
        <dbReference type="SAM" id="MobiDB-lite"/>
    </source>
</evidence>
<reference key="1">
    <citation type="journal article" date="1999" name="Science">
        <title>Genome sequence of the radioresistant bacterium Deinococcus radiodurans R1.</title>
        <authorList>
            <person name="White O."/>
            <person name="Eisen J.A."/>
            <person name="Heidelberg J.F."/>
            <person name="Hickey E.K."/>
            <person name="Peterson J.D."/>
            <person name="Dodson R.J."/>
            <person name="Haft D.H."/>
            <person name="Gwinn M.L."/>
            <person name="Nelson W.C."/>
            <person name="Richardson D.L."/>
            <person name="Moffat K.S."/>
            <person name="Qin H."/>
            <person name="Jiang L."/>
            <person name="Pamphile W."/>
            <person name="Crosby M."/>
            <person name="Shen M."/>
            <person name="Vamathevan J.J."/>
            <person name="Lam P."/>
            <person name="McDonald L.A."/>
            <person name="Utterback T.R."/>
            <person name="Zalewski C."/>
            <person name="Makarova K.S."/>
            <person name="Aravind L."/>
            <person name="Daly M.J."/>
            <person name="Minton K.W."/>
            <person name="Fleischmann R.D."/>
            <person name="Ketchum K.A."/>
            <person name="Nelson K.E."/>
            <person name="Salzberg S.L."/>
            <person name="Smith H.O."/>
            <person name="Venter J.C."/>
            <person name="Fraser C.M."/>
        </authorList>
    </citation>
    <scope>NUCLEOTIDE SEQUENCE [LARGE SCALE GENOMIC DNA]</scope>
    <source>
        <strain>ATCC 13939 / DSM 20539 / JCM 16871 / CCUG 27074 / LMG 4051 / NBRC 15346 / NCIMB 9279 / VKM B-1422 / R1</strain>
    </source>
</reference>
<protein>
    <recommendedName>
        <fullName evidence="1">Adenine deaminase</fullName>
        <shortName evidence="1">Adenase</shortName>
        <shortName evidence="1">Adenine aminase</shortName>
        <ecNumber evidence="1">3.5.4.2</ecNumber>
    </recommendedName>
</protein>
<gene>
    <name evidence="1" type="primary">ade</name>
    <name type="ordered locus">DR_A0270</name>
</gene>
<dbReference type="EC" id="3.5.4.2" evidence="1"/>
<dbReference type="EMBL" id="AE001825">
    <property type="protein sequence ID" value="AAF12490.1"/>
    <property type="molecule type" value="Genomic_DNA"/>
</dbReference>
<dbReference type="PIR" id="E75580">
    <property type="entry name" value="E75580"/>
</dbReference>
<dbReference type="RefSeq" id="NP_285593.1">
    <property type="nucleotide sequence ID" value="NC_001264.1"/>
</dbReference>
<dbReference type="SMR" id="Q9RYP0"/>
<dbReference type="FunCoup" id="Q9RYP0">
    <property type="interactions" value="104"/>
</dbReference>
<dbReference type="STRING" id="243230.DR_A0270"/>
<dbReference type="PaxDb" id="243230-DR_A0270"/>
<dbReference type="EnsemblBacteria" id="AAF12490">
    <property type="protein sequence ID" value="AAF12490"/>
    <property type="gene ID" value="DR_A0270"/>
</dbReference>
<dbReference type="KEGG" id="dra:DR_A0270"/>
<dbReference type="PATRIC" id="fig|243230.17.peg.3161"/>
<dbReference type="eggNOG" id="COG1001">
    <property type="taxonomic scope" value="Bacteria"/>
</dbReference>
<dbReference type="HOGENOM" id="CLU_027935_0_0_0"/>
<dbReference type="InParanoid" id="Q9RYP0"/>
<dbReference type="OrthoDB" id="9775607at2"/>
<dbReference type="Proteomes" id="UP000002524">
    <property type="component" value="Chromosome 2"/>
</dbReference>
<dbReference type="GO" id="GO:0000034">
    <property type="term" value="F:adenine deaminase activity"/>
    <property type="evidence" value="ECO:0000318"/>
    <property type="project" value="GO_Central"/>
</dbReference>
<dbReference type="GO" id="GO:0006146">
    <property type="term" value="P:adenine catabolic process"/>
    <property type="evidence" value="ECO:0007669"/>
    <property type="project" value="InterPro"/>
</dbReference>
<dbReference type="Gene3D" id="3.20.20.140">
    <property type="entry name" value="Metal-dependent hydrolases"/>
    <property type="match status" value="1"/>
</dbReference>
<dbReference type="Gene3D" id="2.30.40.10">
    <property type="entry name" value="Urease, subunit C, domain 1"/>
    <property type="match status" value="1"/>
</dbReference>
<dbReference type="HAMAP" id="MF_01518">
    <property type="entry name" value="Adenine_deamin"/>
    <property type="match status" value="1"/>
</dbReference>
<dbReference type="InterPro" id="IPR006679">
    <property type="entry name" value="Adenine_deam"/>
</dbReference>
<dbReference type="InterPro" id="IPR026912">
    <property type="entry name" value="Adenine_deam_C"/>
</dbReference>
<dbReference type="InterPro" id="IPR006680">
    <property type="entry name" value="Amidohydro-rel"/>
</dbReference>
<dbReference type="InterPro" id="IPR011059">
    <property type="entry name" value="Metal-dep_hydrolase_composite"/>
</dbReference>
<dbReference type="InterPro" id="IPR032466">
    <property type="entry name" value="Metal_Hydrolase"/>
</dbReference>
<dbReference type="PANTHER" id="PTHR11113:SF2">
    <property type="entry name" value="ADENINE DEAMINASE"/>
    <property type="match status" value="1"/>
</dbReference>
<dbReference type="PANTHER" id="PTHR11113">
    <property type="entry name" value="N-ACETYLGLUCOSAMINE-6-PHOSPHATE DEACETYLASE"/>
    <property type="match status" value="1"/>
</dbReference>
<dbReference type="Pfam" id="PF13382">
    <property type="entry name" value="Adenine_deam_C"/>
    <property type="match status" value="1"/>
</dbReference>
<dbReference type="Pfam" id="PF01979">
    <property type="entry name" value="Amidohydro_1"/>
    <property type="match status" value="1"/>
</dbReference>
<dbReference type="SUPFAM" id="SSF51338">
    <property type="entry name" value="Composite domain of metallo-dependent hydrolases"/>
    <property type="match status" value="1"/>
</dbReference>
<dbReference type="SUPFAM" id="SSF51556">
    <property type="entry name" value="Metallo-dependent hydrolases"/>
    <property type="match status" value="1"/>
</dbReference>
<organism>
    <name type="scientific">Deinococcus radiodurans (strain ATCC 13939 / DSM 20539 / JCM 16871 / CCUG 27074 / LMG 4051 / NBRC 15346 / NCIMB 9279 / VKM B-1422 / R1)</name>
    <dbReference type="NCBI Taxonomy" id="243230"/>
    <lineage>
        <taxon>Bacteria</taxon>
        <taxon>Thermotogati</taxon>
        <taxon>Deinococcota</taxon>
        <taxon>Deinococci</taxon>
        <taxon>Deinococcales</taxon>
        <taxon>Deinococcaceae</taxon>
        <taxon>Deinococcus</taxon>
    </lineage>
</organism>
<feature type="chain" id="PRO_0000142416" description="Adenine deaminase">
    <location>
        <begin position="1"/>
        <end position="536"/>
    </location>
</feature>
<feature type="region of interest" description="Disordered" evidence="2">
    <location>
        <begin position="1"/>
        <end position="24"/>
    </location>
</feature>
<comment type="catalytic activity">
    <reaction evidence="1">
        <text>adenine + H2O + H(+) = hypoxanthine + NH4(+)</text>
        <dbReference type="Rhea" id="RHEA:23688"/>
        <dbReference type="ChEBI" id="CHEBI:15377"/>
        <dbReference type="ChEBI" id="CHEBI:15378"/>
        <dbReference type="ChEBI" id="CHEBI:16708"/>
        <dbReference type="ChEBI" id="CHEBI:17368"/>
        <dbReference type="ChEBI" id="CHEBI:28938"/>
        <dbReference type="EC" id="3.5.4.2"/>
    </reaction>
</comment>
<comment type="cofactor">
    <cofactor evidence="1">
        <name>Mn(2+)</name>
        <dbReference type="ChEBI" id="CHEBI:29035"/>
    </cofactor>
</comment>
<comment type="similarity">
    <text evidence="1">Belongs to the metallo-dependent hydrolases superfamily. Adenine deaminase family.</text>
</comment>
<proteinExistence type="inferred from homology"/>
<name>ADEC_DEIRA</name>